<keyword id="KW-0240">DNA-directed RNA polymerase</keyword>
<keyword id="KW-0460">Magnesium</keyword>
<keyword id="KW-0479">Metal-binding</keyword>
<keyword id="KW-0548">Nucleotidyltransferase</keyword>
<keyword id="KW-0804">Transcription</keyword>
<keyword id="KW-0808">Transferase</keyword>
<keyword id="KW-0862">Zinc</keyword>
<accession>Q6GBU4</accession>
<feature type="chain" id="PRO_0000067796" description="DNA-directed RNA polymerase subunit beta'">
    <location>
        <begin position="1"/>
        <end position="1207"/>
    </location>
</feature>
<feature type="binding site" evidence="1">
    <location>
        <position position="60"/>
    </location>
    <ligand>
        <name>Zn(2+)</name>
        <dbReference type="ChEBI" id="CHEBI:29105"/>
        <label>1</label>
    </ligand>
</feature>
<feature type="binding site" evidence="1">
    <location>
        <position position="62"/>
    </location>
    <ligand>
        <name>Zn(2+)</name>
        <dbReference type="ChEBI" id="CHEBI:29105"/>
        <label>1</label>
    </ligand>
</feature>
<feature type="binding site" evidence="1">
    <location>
        <position position="75"/>
    </location>
    <ligand>
        <name>Zn(2+)</name>
        <dbReference type="ChEBI" id="CHEBI:29105"/>
        <label>1</label>
    </ligand>
</feature>
<feature type="binding site" evidence="1">
    <location>
        <position position="78"/>
    </location>
    <ligand>
        <name>Zn(2+)</name>
        <dbReference type="ChEBI" id="CHEBI:29105"/>
        <label>1</label>
    </ligand>
</feature>
<feature type="binding site" evidence="1">
    <location>
        <position position="449"/>
    </location>
    <ligand>
        <name>Mg(2+)</name>
        <dbReference type="ChEBI" id="CHEBI:18420"/>
    </ligand>
</feature>
<feature type="binding site" evidence="1">
    <location>
        <position position="451"/>
    </location>
    <ligand>
        <name>Mg(2+)</name>
        <dbReference type="ChEBI" id="CHEBI:18420"/>
    </ligand>
</feature>
<feature type="binding site" evidence="1">
    <location>
        <position position="453"/>
    </location>
    <ligand>
        <name>Mg(2+)</name>
        <dbReference type="ChEBI" id="CHEBI:18420"/>
    </ligand>
</feature>
<feature type="binding site" evidence="1">
    <location>
        <position position="822"/>
    </location>
    <ligand>
        <name>Zn(2+)</name>
        <dbReference type="ChEBI" id="CHEBI:29105"/>
        <label>2</label>
    </ligand>
</feature>
<feature type="binding site" evidence="1">
    <location>
        <position position="896"/>
    </location>
    <ligand>
        <name>Zn(2+)</name>
        <dbReference type="ChEBI" id="CHEBI:29105"/>
        <label>2</label>
    </ligand>
</feature>
<feature type="binding site" evidence="1">
    <location>
        <position position="903"/>
    </location>
    <ligand>
        <name>Zn(2+)</name>
        <dbReference type="ChEBI" id="CHEBI:29105"/>
        <label>2</label>
    </ligand>
</feature>
<feature type="binding site" evidence="1">
    <location>
        <position position="906"/>
    </location>
    <ligand>
        <name>Zn(2+)</name>
        <dbReference type="ChEBI" id="CHEBI:29105"/>
        <label>2</label>
    </ligand>
</feature>
<protein>
    <recommendedName>
        <fullName evidence="1">DNA-directed RNA polymerase subunit beta'</fullName>
        <shortName evidence="1">RNAP subunit beta'</shortName>
        <ecNumber evidence="1">2.7.7.6</ecNumber>
    </recommendedName>
    <alternativeName>
        <fullName evidence="1">RNA polymerase subunit beta'</fullName>
    </alternativeName>
    <alternativeName>
        <fullName evidence="1">Transcriptase subunit beta'</fullName>
    </alternativeName>
</protein>
<sequence>MIDVNNFHYMKIGLASPEKIRSWSFGEVKKPETINYRTLKPEKDGLFCERIFGPTKDWECSCGKYKRVRYKGMVCDRCGVEVTKSKVRRERMGHIELAAPVSHIWYFKGIPSRMGLLLDMSPRALEEVIYFASYVVVDPGPTGLEKKTLLSEAEFRDYYDKYPGQFVAKMGAEGIKDLLEEIDLDEELKLLRDELESATGQRLTRAIKRLEVVESFRNSGNKPSWMILDVLPIIPPEIRPMVQLDGGRFATSDLNDLYRRVINRNNRLKRLLDLGAPGIIVQNEKRMLQEAVDALIDNGRRGRPVTGPGNRPLKSLSHMLKGKQGRFRQNLLGKRVDYSGRSVIAVGPSLKMYQCGLPKEMALELFKPFVMKELVQREIATNIKNAKSKIERMDDEVWDVLEEVIREHPVLLNRAPTLHRLGIQAFEPTLVEGRAIRLHPLVTTAYNADFDGDQMAVHVPLSKEAQAEARMLMLAAQNILNPKDGKPVVTPSQDMVLGNYYLTLERKDAVNTGAIFNNTNEVLKAYANGFVHLHTRIGVHASSFNNPTFTEEQNKKILATSVGKIIFNEIIPDSFAYINEPTQENLERKTPNRYFIDPTTLGEGGLKEYFENEELIEPFNKKFLGNIIAEVFNRFSITDTSMMLDRMKDLGFKFSSKAGITVGVADIVVLPDKQQILDEHEKLVDRITKQFNRGLITEEERYNAVVEIWTDAKDQIQGELMQSLDKTNPIFMMSDSGARGNASNFTQLAGMRGLMAAPSGKIIELPITSSFREGLTVLEYFISTHGARKGLADTALKTADSGYLTRRLVDVAQDVIVREEDCGTDRGLLVSDIKEGTEMIEPFIERIEGRYSKETIRHPETDEIIIRPDELITPEIAKKITDAGIEQMYIRSAFTCNARHGVCEKCYGKNLATGEKVEVGEAVGTIAAQSIGEPGTQLTMRTFHTGGVAGSDITQGLPRIQEIFEARNPKGQAVITEIEGVVEDIKLAKDRQQEIVVKGANETRSYLASGTSRIIVEIGQPVQRGEVLTEGSIEPKNYLSVAGLNATESYLLKEVQKVYRMQGVEIDDKHVEVMVRQMLRKVRIIEAGDTKLLPGSLVDIHNFTDANREAFKHRKRPATAKPVLLGITKASLETESFLSAASFQETTRVLTDAAIKGKRDDLLGLKENVIIGKLIPAGTGMRRYSDVKYEKTAKPVAEVESQTEVTE</sequence>
<reference key="1">
    <citation type="journal article" date="2004" name="Proc. Natl. Acad. Sci. U.S.A.">
        <title>Complete genomes of two clinical Staphylococcus aureus strains: evidence for the rapid evolution of virulence and drug resistance.</title>
        <authorList>
            <person name="Holden M.T.G."/>
            <person name="Feil E.J."/>
            <person name="Lindsay J.A."/>
            <person name="Peacock S.J."/>
            <person name="Day N.P.J."/>
            <person name="Enright M.C."/>
            <person name="Foster T.J."/>
            <person name="Moore C.E."/>
            <person name="Hurst L."/>
            <person name="Atkin R."/>
            <person name="Barron A."/>
            <person name="Bason N."/>
            <person name="Bentley S.D."/>
            <person name="Chillingworth C."/>
            <person name="Chillingworth T."/>
            <person name="Churcher C."/>
            <person name="Clark L."/>
            <person name="Corton C."/>
            <person name="Cronin A."/>
            <person name="Doggett J."/>
            <person name="Dowd L."/>
            <person name="Feltwell T."/>
            <person name="Hance Z."/>
            <person name="Harris B."/>
            <person name="Hauser H."/>
            <person name="Holroyd S."/>
            <person name="Jagels K."/>
            <person name="James K.D."/>
            <person name="Lennard N."/>
            <person name="Line A."/>
            <person name="Mayes R."/>
            <person name="Moule S."/>
            <person name="Mungall K."/>
            <person name="Ormond D."/>
            <person name="Quail M.A."/>
            <person name="Rabbinowitsch E."/>
            <person name="Rutherford K.M."/>
            <person name="Sanders M."/>
            <person name="Sharp S."/>
            <person name="Simmonds M."/>
            <person name="Stevens K."/>
            <person name="Whitehead S."/>
            <person name="Barrell B.G."/>
            <person name="Spratt B.G."/>
            <person name="Parkhill J."/>
        </authorList>
    </citation>
    <scope>NUCLEOTIDE SEQUENCE [LARGE SCALE GENOMIC DNA]</scope>
    <source>
        <strain>MSSA476</strain>
    </source>
</reference>
<evidence type="ECO:0000255" key="1">
    <source>
        <dbReference type="HAMAP-Rule" id="MF_01322"/>
    </source>
</evidence>
<proteinExistence type="inferred from homology"/>
<comment type="function">
    <text evidence="1">DNA-dependent RNA polymerase catalyzes the transcription of DNA into RNA using the four ribonucleoside triphosphates as substrates.</text>
</comment>
<comment type="catalytic activity">
    <reaction evidence="1">
        <text>RNA(n) + a ribonucleoside 5'-triphosphate = RNA(n+1) + diphosphate</text>
        <dbReference type="Rhea" id="RHEA:21248"/>
        <dbReference type="Rhea" id="RHEA-COMP:14527"/>
        <dbReference type="Rhea" id="RHEA-COMP:17342"/>
        <dbReference type="ChEBI" id="CHEBI:33019"/>
        <dbReference type="ChEBI" id="CHEBI:61557"/>
        <dbReference type="ChEBI" id="CHEBI:140395"/>
        <dbReference type="EC" id="2.7.7.6"/>
    </reaction>
</comment>
<comment type="cofactor">
    <cofactor evidence="1">
        <name>Mg(2+)</name>
        <dbReference type="ChEBI" id="CHEBI:18420"/>
    </cofactor>
    <text evidence="1">Binds 1 Mg(2+) ion per subunit.</text>
</comment>
<comment type="cofactor">
    <cofactor evidence="1">
        <name>Zn(2+)</name>
        <dbReference type="ChEBI" id="CHEBI:29105"/>
    </cofactor>
    <text evidence="1">Binds 2 Zn(2+) ions per subunit.</text>
</comment>
<comment type="subunit">
    <text evidence="1">The RNAP catalytic core consists of 2 alpha, 1 beta, 1 beta' and 1 omega subunit. When a sigma factor is associated with the core the holoenzyme is formed, which can initiate transcription.</text>
</comment>
<comment type="similarity">
    <text evidence="1">Belongs to the RNA polymerase beta' chain family.</text>
</comment>
<name>RPOC_STAAS</name>
<gene>
    <name evidence="1" type="primary">rpoC</name>
    <name type="ordered locus">SAS0501</name>
</gene>
<dbReference type="EC" id="2.7.7.6" evidence="1"/>
<dbReference type="EMBL" id="BX571857">
    <property type="protein sequence ID" value="CAG42276.1"/>
    <property type="molecule type" value="Genomic_DNA"/>
</dbReference>
<dbReference type="SMR" id="Q6GBU4"/>
<dbReference type="KEGG" id="sas:SAS0501"/>
<dbReference type="HOGENOM" id="CLU_000524_3_0_9"/>
<dbReference type="GO" id="GO:0000428">
    <property type="term" value="C:DNA-directed RNA polymerase complex"/>
    <property type="evidence" value="ECO:0007669"/>
    <property type="project" value="UniProtKB-KW"/>
</dbReference>
<dbReference type="GO" id="GO:0003677">
    <property type="term" value="F:DNA binding"/>
    <property type="evidence" value="ECO:0007669"/>
    <property type="project" value="UniProtKB-UniRule"/>
</dbReference>
<dbReference type="GO" id="GO:0003899">
    <property type="term" value="F:DNA-directed RNA polymerase activity"/>
    <property type="evidence" value="ECO:0007669"/>
    <property type="project" value="UniProtKB-UniRule"/>
</dbReference>
<dbReference type="GO" id="GO:0000287">
    <property type="term" value="F:magnesium ion binding"/>
    <property type="evidence" value="ECO:0007669"/>
    <property type="project" value="UniProtKB-UniRule"/>
</dbReference>
<dbReference type="GO" id="GO:0008270">
    <property type="term" value="F:zinc ion binding"/>
    <property type="evidence" value="ECO:0007669"/>
    <property type="project" value="UniProtKB-UniRule"/>
</dbReference>
<dbReference type="GO" id="GO:0006351">
    <property type="term" value="P:DNA-templated transcription"/>
    <property type="evidence" value="ECO:0007669"/>
    <property type="project" value="UniProtKB-UniRule"/>
</dbReference>
<dbReference type="CDD" id="cd02655">
    <property type="entry name" value="RNAP_beta'_C"/>
    <property type="match status" value="1"/>
</dbReference>
<dbReference type="CDD" id="cd01609">
    <property type="entry name" value="RNAP_beta'_N"/>
    <property type="match status" value="1"/>
</dbReference>
<dbReference type="FunFam" id="1.10.132.30:FF:000003">
    <property type="entry name" value="DNA-directed RNA polymerase subunit beta"/>
    <property type="match status" value="1"/>
</dbReference>
<dbReference type="FunFam" id="1.10.150.390:FF:000002">
    <property type="entry name" value="DNA-directed RNA polymerase subunit beta"/>
    <property type="match status" value="1"/>
</dbReference>
<dbReference type="FunFam" id="4.10.860.120:FF:000001">
    <property type="entry name" value="DNA-directed RNA polymerase subunit beta"/>
    <property type="match status" value="1"/>
</dbReference>
<dbReference type="Gene3D" id="1.10.132.30">
    <property type="match status" value="1"/>
</dbReference>
<dbReference type="Gene3D" id="1.10.150.390">
    <property type="match status" value="1"/>
</dbReference>
<dbReference type="Gene3D" id="1.10.1790.20">
    <property type="match status" value="1"/>
</dbReference>
<dbReference type="Gene3D" id="1.10.40.90">
    <property type="match status" value="1"/>
</dbReference>
<dbReference type="Gene3D" id="2.40.40.20">
    <property type="match status" value="1"/>
</dbReference>
<dbReference type="Gene3D" id="2.40.50.100">
    <property type="match status" value="1"/>
</dbReference>
<dbReference type="Gene3D" id="4.10.860.120">
    <property type="entry name" value="RNA polymerase II, clamp domain"/>
    <property type="match status" value="1"/>
</dbReference>
<dbReference type="Gene3D" id="1.10.274.100">
    <property type="entry name" value="RNA polymerase Rpb1, domain 3"/>
    <property type="match status" value="1"/>
</dbReference>
<dbReference type="HAMAP" id="MF_01322">
    <property type="entry name" value="RNApol_bact_RpoC"/>
    <property type="match status" value="1"/>
</dbReference>
<dbReference type="InterPro" id="IPR045867">
    <property type="entry name" value="DNA-dir_RpoC_beta_prime"/>
</dbReference>
<dbReference type="InterPro" id="IPR012754">
    <property type="entry name" value="DNA-dir_RpoC_beta_prime_bact"/>
</dbReference>
<dbReference type="InterPro" id="IPR000722">
    <property type="entry name" value="RNA_pol_asu"/>
</dbReference>
<dbReference type="InterPro" id="IPR006592">
    <property type="entry name" value="RNA_pol_N"/>
</dbReference>
<dbReference type="InterPro" id="IPR007080">
    <property type="entry name" value="RNA_pol_Rpb1_1"/>
</dbReference>
<dbReference type="InterPro" id="IPR007066">
    <property type="entry name" value="RNA_pol_Rpb1_3"/>
</dbReference>
<dbReference type="InterPro" id="IPR042102">
    <property type="entry name" value="RNA_pol_Rpb1_3_sf"/>
</dbReference>
<dbReference type="InterPro" id="IPR007083">
    <property type="entry name" value="RNA_pol_Rpb1_4"/>
</dbReference>
<dbReference type="InterPro" id="IPR007081">
    <property type="entry name" value="RNA_pol_Rpb1_5"/>
</dbReference>
<dbReference type="InterPro" id="IPR044893">
    <property type="entry name" value="RNA_pol_Rpb1_clamp_domain"/>
</dbReference>
<dbReference type="InterPro" id="IPR038120">
    <property type="entry name" value="Rpb1_funnel_sf"/>
</dbReference>
<dbReference type="NCBIfam" id="TIGR02386">
    <property type="entry name" value="rpoC_TIGR"/>
    <property type="match status" value="1"/>
</dbReference>
<dbReference type="PANTHER" id="PTHR19376">
    <property type="entry name" value="DNA-DIRECTED RNA POLYMERASE"/>
    <property type="match status" value="1"/>
</dbReference>
<dbReference type="PANTHER" id="PTHR19376:SF54">
    <property type="entry name" value="DNA-DIRECTED RNA POLYMERASE SUBUNIT BETA"/>
    <property type="match status" value="1"/>
</dbReference>
<dbReference type="Pfam" id="PF04997">
    <property type="entry name" value="RNA_pol_Rpb1_1"/>
    <property type="match status" value="1"/>
</dbReference>
<dbReference type="Pfam" id="PF00623">
    <property type="entry name" value="RNA_pol_Rpb1_2"/>
    <property type="match status" value="1"/>
</dbReference>
<dbReference type="Pfam" id="PF04983">
    <property type="entry name" value="RNA_pol_Rpb1_3"/>
    <property type="match status" value="1"/>
</dbReference>
<dbReference type="Pfam" id="PF05000">
    <property type="entry name" value="RNA_pol_Rpb1_4"/>
    <property type="match status" value="1"/>
</dbReference>
<dbReference type="Pfam" id="PF04998">
    <property type="entry name" value="RNA_pol_Rpb1_5"/>
    <property type="match status" value="1"/>
</dbReference>
<dbReference type="SMART" id="SM00663">
    <property type="entry name" value="RPOLA_N"/>
    <property type="match status" value="1"/>
</dbReference>
<dbReference type="SUPFAM" id="SSF64484">
    <property type="entry name" value="beta and beta-prime subunits of DNA dependent RNA-polymerase"/>
    <property type="match status" value="1"/>
</dbReference>
<organism>
    <name type="scientific">Staphylococcus aureus (strain MSSA476)</name>
    <dbReference type="NCBI Taxonomy" id="282459"/>
    <lineage>
        <taxon>Bacteria</taxon>
        <taxon>Bacillati</taxon>
        <taxon>Bacillota</taxon>
        <taxon>Bacilli</taxon>
        <taxon>Bacillales</taxon>
        <taxon>Staphylococcaceae</taxon>
        <taxon>Staphylococcus</taxon>
    </lineage>
</organism>